<comment type="function">
    <text evidence="1">Binds to DNA and alters its conformation. May be involved in regulation of gene expression, nucleoid organization and DNA protection.</text>
</comment>
<comment type="subunit">
    <text evidence="1">Homodimer.</text>
</comment>
<comment type="subcellular location">
    <subcellularLocation>
        <location evidence="1">Cytoplasm</location>
        <location evidence="1">Nucleoid</location>
    </subcellularLocation>
</comment>
<comment type="similarity">
    <text evidence="1">Belongs to the YbaB/EbfC family.</text>
</comment>
<evidence type="ECO:0000255" key="1">
    <source>
        <dbReference type="HAMAP-Rule" id="MF_00274"/>
    </source>
</evidence>
<reference key="1">
    <citation type="journal article" date="2009" name="J. Bacteriol.">
        <title>The genome of Thermosipho africanus TCF52B: lateral genetic connections to the Firmicutes and Archaea.</title>
        <authorList>
            <person name="Nesboe C.L."/>
            <person name="Bapteste E."/>
            <person name="Curtis B."/>
            <person name="Dahle H."/>
            <person name="Lopez P."/>
            <person name="Macleod D."/>
            <person name="Dlutek M."/>
            <person name="Bowman S."/>
            <person name="Zhaxybayeva O."/>
            <person name="Birkeland N.-K."/>
            <person name="Doolittle W.F."/>
        </authorList>
    </citation>
    <scope>NUCLEOTIDE SEQUENCE [LARGE SCALE GENOMIC DNA]</scope>
    <source>
        <strain>TCF52B</strain>
    </source>
</reference>
<gene>
    <name type="ordered locus">THA_1374</name>
</gene>
<organism>
    <name type="scientific">Thermosipho africanus (strain TCF52B)</name>
    <dbReference type="NCBI Taxonomy" id="484019"/>
    <lineage>
        <taxon>Bacteria</taxon>
        <taxon>Thermotogati</taxon>
        <taxon>Thermotogota</taxon>
        <taxon>Thermotogae</taxon>
        <taxon>Thermotogales</taxon>
        <taxon>Fervidobacteriaceae</taxon>
        <taxon>Thermosipho</taxon>
    </lineage>
</organism>
<sequence length="113" mass="12614">MKKLKSFGGKNLSGKSMNQLQKLQEEMQKKLQEVEEGFSNVEVEVSVGGGAIKILATADRKVKDIEIDEDLLSDGETLKDLLTAGINELMEKIEKIREEEMAKVTQNLLPFGF</sequence>
<name>Y1374_THEAB</name>
<dbReference type="EMBL" id="CP001185">
    <property type="protein sequence ID" value="ACJ75819.1"/>
    <property type="molecule type" value="Genomic_DNA"/>
</dbReference>
<dbReference type="RefSeq" id="WP_004101751.1">
    <property type="nucleotide sequence ID" value="NC_011653.1"/>
</dbReference>
<dbReference type="SMR" id="B7ICU2"/>
<dbReference type="STRING" id="484019.THA_1374"/>
<dbReference type="KEGG" id="taf:THA_1374"/>
<dbReference type="eggNOG" id="COG0718">
    <property type="taxonomic scope" value="Bacteria"/>
</dbReference>
<dbReference type="HOGENOM" id="CLU_140930_1_0_0"/>
<dbReference type="OrthoDB" id="49583at2"/>
<dbReference type="Proteomes" id="UP000002453">
    <property type="component" value="Chromosome"/>
</dbReference>
<dbReference type="GO" id="GO:0043590">
    <property type="term" value="C:bacterial nucleoid"/>
    <property type="evidence" value="ECO:0007669"/>
    <property type="project" value="UniProtKB-UniRule"/>
</dbReference>
<dbReference type="GO" id="GO:0005829">
    <property type="term" value="C:cytosol"/>
    <property type="evidence" value="ECO:0007669"/>
    <property type="project" value="TreeGrafter"/>
</dbReference>
<dbReference type="GO" id="GO:0003677">
    <property type="term" value="F:DNA binding"/>
    <property type="evidence" value="ECO:0007669"/>
    <property type="project" value="UniProtKB-UniRule"/>
</dbReference>
<dbReference type="Gene3D" id="3.30.1310.10">
    <property type="entry name" value="Nucleoid-associated protein YbaB-like domain"/>
    <property type="match status" value="1"/>
</dbReference>
<dbReference type="HAMAP" id="MF_00274">
    <property type="entry name" value="DNA_YbaB_EbfC"/>
    <property type="match status" value="1"/>
</dbReference>
<dbReference type="InterPro" id="IPR036894">
    <property type="entry name" value="YbaB-like_sf"/>
</dbReference>
<dbReference type="InterPro" id="IPR004401">
    <property type="entry name" value="YbaB/EbfC"/>
</dbReference>
<dbReference type="PANTHER" id="PTHR33449">
    <property type="entry name" value="NUCLEOID-ASSOCIATED PROTEIN YBAB"/>
    <property type="match status" value="1"/>
</dbReference>
<dbReference type="PANTHER" id="PTHR33449:SF1">
    <property type="entry name" value="NUCLEOID-ASSOCIATED PROTEIN YBAB"/>
    <property type="match status" value="1"/>
</dbReference>
<dbReference type="Pfam" id="PF02575">
    <property type="entry name" value="YbaB_DNA_bd"/>
    <property type="match status" value="1"/>
</dbReference>
<dbReference type="PIRSF" id="PIRSF004555">
    <property type="entry name" value="UCP004555"/>
    <property type="match status" value="1"/>
</dbReference>
<dbReference type="SUPFAM" id="SSF82607">
    <property type="entry name" value="YbaB-like"/>
    <property type="match status" value="1"/>
</dbReference>
<feature type="chain" id="PRO_1000119329" description="Nucleoid-associated protein THA_1374">
    <location>
        <begin position="1"/>
        <end position="113"/>
    </location>
</feature>
<accession>B7ICU2</accession>
<keyword id="KW-0963">Cytoplasm</keyword>
<keyword id="KW-0238">DNA-binding</keyword>
<keyword id="KW-1185">Reference proteome</keyword>
<proteinExistence type="inferred from homology"/>
<protein>
    <recommendedName>
        <fullName evidence="1">Nucleoid-associated protein THA_1374</fullName>
    </recommendedName>
</protein>